<reference key="1">
    <citation type="journal article" date="2002" name="Nature">
        <title>The genome sequence of Schizosaccharomyces pombe.</title>
        <authorList>
            <person name="Wood V."/>
            <person name="Gwilliam R."/>
            <person name="Rajandream M.A."/>
            <person name="Lyne M.H."/>
            <person name="Lyne R."/>
            <person name="Stewart A."/>
            <person name="Sgouros J.G."/>
            <person name="Peat N."/>
            <person name="Hayles J."/>
            <person name="Baker S.G."/>
            <person name="Basham D."/>
            <person name="Bowman S."/>
            <person name="Brooks K."/>
            <person name="Brown D."/>
            <person name="Brown S."/>
            <person name="Chillingworth T."/>
            <person name="Churcher C.M."/>
            <person name="Collins M."/>
            <person name="Connor R."/>
            <person name="Cronin A."/>
            <person name="Davis P."/>
            <person name="Feltwell T."/>
            <person name="Fraser A."/>
            <person name="Gentles S."/>
            <person name="Goble A."/>
            <person name="Hamlin N."/>
            <person name="Harris D.E."/>
            <person name="Hidalgo J."/>
            <person name="Hodgson G."/>
            <person name="Holroyd S."/>
            <person name="Hornsby T."/>
            <person name="Howarth S."/>
            <person name="Huckle E.J."/>
            <person name="Hunt S."/>
            <person name="Jagels K."/>
            <person name="James K.D."/>
            <person name="Jones L."/>
            <person name="Jones M."/>
            <person name="Leather S."/>
            <person name="McDonald S."/>
            <person name="McLean J."/>
            <person name="Mooney P."/>
            <person name="Moule S."/>
            <person name="Mungall K.L."/>
            <person name="Murphy L.D."/>
            <person name="Niblett D."/>
            <person name="Odell C."/>
            <person name="Oliver K."/>
            <person name="O'Neil S."/>
            <person name="Pearson D."/>
            <person name="Quail M.A."/>
            <person name="Rabbinowitsch E."/>
            <person name="Rutherford K.M."/>
            <person name="Rutter S."/>
            <person name="Saunders D."/>
            <person name="Seeger K."/>
            <person name="Sharp S."/>
            <person name="Skelton J."/>
            <person name="Simmonds M.N."/>
            <person name="Squares R."/>
            <person name="Squares S."/>
            <person name="Stevens K."/>
            <person name="Taylor K."/>
            <person name="Taylor R.G."/>
            <person name="Tivey A."/>
            <person name="Walsh S.V."/>
            <person name="Warren T."/>
            <person name="Whitehead S."/>
            <person name="Woodward J.R."/>
            <person name="Volckaert G."/>
            <person name="Aert R."/>
            <person name="Robben J."/>
            <person name="Grymonprez B."/>
            <person name="Weltjens I."/>
            <person name="Vanstreels E."/>
            <person name="Rieger M."/>
            <person name="Schaefer M."/>
            <person name="Mueller-Auer S."/>
            <person name="Gabel C."/>
            <person name="Fuchs M."/>
            <person name="Duesterhoeft A."/>
            <person name="Fritzc C."/>
            <person name="Holzer E."/>
            <person name="Moestl D."/>
            <person name="Hilbert H."/>
            <person name="Borzym K."/>
            <person name="Langer I."/>
            <person name="Beck A."/>
            <person name="Lehrach H."/>
            <person name="Reinhardt R."/>
            <person name="Pohl T.M."/>
            <person name="Eger P."/>
            <person name="Zimmermann W."/>
            <person name="Wedler H."/>
            <person name="Wambutt R."/>
            <person name="Purnelle B."/>
            <person name="Goffeau A."/>
            <person name="Cadieu E."/>
            <person name="Dreano S."/>
            <person name="Gloux S."/>
            <person name="Lelaure V."/>
            <person name="Mottier S."/>
            <person name="Galibert F."/>
            <person name="Aves S.J."/>
            <person name="Xiang Z."/>
            <person name="Hunt C."/>
            <person name="Moore K."/>
            <person name="Hurst S.M."/>
            <person name="Lucas M."/>
            <person name="Rochet M."/>
            <person name="Gaillardin C."/>
            <person name="Tallada V.A."/>
            <person name="Garzon A."/>
            <person name="Thode G."/>
            <person name="Daga R.R."/>
            <person name="Cruzado L."/>
            <person name="Jimenez J."/>
            <person name="Sanchez M."/>
            <person name="del Rey F."/>
            <person name="Benito J."/>
            <person name="Dominguez A."/>
            <person name="Revuelta J.L."/>
            <person name="Moreno S."/>
            <person name="Armstrong J."/>
            <person name="Forsburg S.L."/>
            <person name="Cerutti L."/>
            <person name="Lowe T."/>
            <person name="McCombie W.R."/>
            <person name="Paulsen I."/>
            <person name="Potashkin J."/>
            <person name="Shpakovski G.V."/>
            <person name="Ussery D."/>
            <person name="Barrell B.G."/>
            <person name="Nurse P."/>
        </authorList>
    </citation>
    <scope>NUCLEOTIDE SEQUENCE [LARGE SCALE GENOMIC DNA]</scope>
    <source>
        <strain>972 / ATCC 24843</strain>
    </source>
</reference>
<comment type="function">
    <text evidence="2">Aminocarboxypropyltransferase that catalyzes the aminocarboxypropyl transfer on pseudouridine at position 1191 (Psi1191) in 18S rRNA. It constitutes the last step in biosynthesis of the hypermodified N1-methyl-N3-(3-amino-3-carboxypropyl) pseudouridine (m1acp3-Psi) conserved in eukaryotic 18S rRNA. Required for processing 35S pre-rRNA at site D.</text>
</comment>
<comment type="catalytic activity">
    <reaction evidence="2 3">
        <text>an N(1)-methylpseudouridine in rRNA + S-adenosyl-L-methionine = N(1)-methyl-N(3)-[(3S)-3-amino-3-carboxypropyl]pseudouridine in rRNA + S-methyl-5'-thioadenosine + H(+)</text>
        <dbReference type="Rhea" id="RHEA:63296"/>
        <dbReference type="Rhea" id="RHEA-COMP:11634"/>
        <dbReference type="Rhea" id="RHEA-COMP:16310"/>
        <dbReference type="ChEBI" id="CHEBI:15378"/>
        <dbReference type="ChEBI" id="CHEBI:17509"/>
        <dbReference type="ChEBI" id="CHEBI:59789"/>
        <dbReference type="ChEBI" id="CHEBI:74890"/>
        <dbReference type="ChEBI" id="CHEBI:146234"/>
        <dbReference type="EC" id="2.5.1.157"/>
    </reaction>
    <physiologicalReaction direction="left-to-right" evidence="2 3">
        <dbReference type="Rhea" id="RHEA:63297"/>
    </physiologicalReaction>
</comment>
<comment type="catalytic activity">
    <reaction evidence="2 3">
        <text>N(1)-methylpseudouridine(1191) in yeast 18S rRNA + S-adenosyl-L-methionine = N(1)-methyl-N(3)-[(3S)-3-amino-3-carboxypropyl]pseudouridine(1191) in yeast 18S rRNA + S-methyl-5'-thioadenosine + H(+)</text>
        <dbReference type="Rhea" id="RHEA:63300"/>
        <dbReference type="Rhea" id="RHEA-COMP:13852"/>
        <dbReference type="Rhea" id="RHEA-COMP:16309"/>
        <dbReference type="ChEBI" id="CHEBI:15378"/>
        <dbReference type="ChEBI" id="CHEBI:17509"/>
        <dbReference type="ChEBI" id="CHEBI:59789"/>
        <dbReference type="ChEBI" id="CHEBI:74890"/>
        <dbReference type="ChEBI" id="CHEBI:146234"/>
    </reaction>
    <physiologicalReaction direction="left-to-right" evidence="2 3">
        <dbReference type="Rhea" id="RHEA:63301"/>
    </physiologicalReaction>
</comment>
<comment type="subcellular location">
    <subcellularLocation>
        <location evidence="3">Cytoplasm</location>
    </subcellularLocation>
    <subcellularLocation>
        <location evidence="3">Nucleus</location>
    </subcellularLocation>
</comment>
<comment type="similarity">
    <text evidence="3">Belongs to the TDD superfamily. TSR3 family.</text>
</comment>
<organism>
    <name type="scientific">Schizosaccharomyces pombe (strain 972 / ATCC 24843)</name>
    <name type="common">Fission yeast</name>
    <dbReference type="NCBI Taxonomy" id="284812"/>
    <lineage>
        <taxon>Eukaryota</taxon>
        <taxon>Fungi</taxon>
        <taxon>Dikarya</taxon>
        <taxon>Ascomycota</taxon>
        <taxon>Taphrinomycotina</taxon>
        <taxon>Schizosaccharomycetes</taxon>
        <taxon>Schizosaccharomycetales</taxon>
        <taxon>Schizosaccharomycetaceae</taxon>
        <taxon>Schizosaccharomyces</taxon>
    </lineage>
</organism>
<proteinExistence type="inferred from homology"/>
<sequence>MGPRSSNRRSNAKDGFKGSNKASKFPLPLAMWDFGHCNPNACSGKRLERLGCVRNLRIGQKFRGVVITPNGKVPVSPADKEYFDNGGASVVECSWARIEEIPFSRIGGRCERLLPYLVASNPVNYGRPWRLNCAEALAACMYIVGYPNEARLLMDNFKWGHSFFEVNEELLDIYAQCHDAQDIQEKEKKYLEEMEASYQEQRNQTTDDIWSAGNLNHKPTLNTSSTHSNSEESRSPLHEPSEASLAHDEHSIPTDDNEETLTNLQANDVDEDEVWRKIVRMKVHSTDT</sequence>
<gene>
    <name evidence="6" type="primary">tsr3</name>
    <name type="ORF">SPAC1F3.04c</name>
</gene>
<protein>
    <recommendedName>
        <fullName evidence="5">18S rRNA aminocarboxypropyltransferase</fullName>
        <ecNumber evidence="2">2.5.1.157</ecNumber>
    </recommendedName>
</protein>
<feature type="chain" id="PRO_0000094427" description="18S rRNA aminocarboxypropyltransferase">
    <location>
        <begin position="1"/>
        <end position="288"/>
    </location>
</feature>
<feature type="region of interest" description="Disordered" evidence="4">
    <location>
        <begin position="209"/>
        <end position="267"/>
    </location>
</feature>
<feature type="compositionally biased region" description="Polar residues" evidence="4">
    <location>
        <begin position="209"/>
        <end position="221"/>
    </location>
</feature>
<feature type="compositionally biased region" description="Basic and acidic residues" evidence="4">
    <location>
        <begin position="229"/>
        <end position="253"/>
    </location>
</feature>
<feature type="binding site" evidence="1">
    <location>
        <position position="43"/>
    </location>
    <ligand>
        <name>S-adenosyl-L-methionine</name>
        <dbReference type="ChEBI" id="CHEBI:59789"/>
    </ligand>
</feature>
<feature type="binding site" evidence="1">
    <location>
        <position position="91"/>
    </location>
    <ligand>
        <name>S-adenosyl-L-methionine</name>
        <dbReference type="ChEBI" id="CHEBI:59789"/>
    </ligand>
</feature>
<feature type="binding site" evidence="1">
    <location>
        <position position="114"/>
    </location>
    <ligand>
        <name>S-adenosyl-L-methionine</name>
        <dbReference type="ChEBI" id="CHEBI:59789"/>
    </ligand>
</feature>
<feature type="binding site" evidence="1">
    <location>
        <position position="129"/>
    </location>
    <ligand>
        <name>S-adenosyl-L-methionine</name>
        <dbReference type="ChEBI" id="CHEBI:59789"/>
    </ligand>
</feature>
<name>TSR3_SCHPO</name>
<accession>Q10409</accession>
<evidence type="ECO:0000250" key="1">
    <source>
        <dbReference type="UniProtKB" id="E1QU22"/>
    </source>
</evidence>
<evidence type="ECO:0000250" key="2">
    <source>
        <dbReference type="UniProtKB" id="Q12094"/>
    </source>
</evidence>
<evidence type="ECO:0000255" key="3">
    <source>
        <dbReference type="HAMAP-Rule" id="MF_03146"/>
    </source>
</evidence>
<evidence type="ECO:0000256" key="4">
    <source>
        <dbReference type="SAM" id="MobiDB-lite"/>
    </source>
</evidence>
<evidence type="ECO:0000305" key="5"/>
<evidence type="ECO:0000312" key="6">
    <source>
        <dbReference type="PomBase" id="SPAC1F3.04c"/>
    </source>
</evidence>
<dbReference type="EC" id="2.5.1.157" evidence="2"/>
<dbReference type="EMBL" id="CU329670">
    <property type="protein sequence ID" value="CAA94622.1"/>
    <property type="molecule type" value="Genomic_DNA"/>
</dbReference>
<dbReference type="PIR" id="T38075">
    <property type="entry name" value="T38075"/>
</dbReference>
<dbReference type="RefSeq" id="NP_593007.1">
    <property type="nucleotide sequence ID" value="NM_001018406.2"/>
</dbReference>
<dbReference type="SMR" id="Q10409"/>
<dbReference type="FunCoup" id="Q10409">
    <property type="interactions" value="182"/>
</dbReference>
<dbReference type="STRING" id="284812.Q10409"/>
<dbReference type="PaxDb" id="4896-SPAC1F3.04c.1"/>
<dbReference type="EnsemblFungi" id="SPAC1F3.04c.1">
    <property type="protein sequence ID" value="SPAC1F3.04c.1:pep"/>
    <property type="gene ID" value="SPAC1F3.04c"/>
</dbReference>
<dbReference type="GeneID" id="2542142"/>
<dbReference type="KEGG" id="spo:2542142"/>
<dbReference type="PomBase" id="SPAC1F3.04c">
    <property type="gene designation" value="tsr3"/>
</dbReference>
<dbReference type="VEuPathDB" id="FungiDB:SPAC1F3.04c"/>
<dbReference type="eggNOG" id="KOG3154">
    <property type="taxonomic scope" value="Eukaryota"/>
</dbReference>
<dbReference type="HOGENOM" id="CLU_035060_2_1_1"/>
<dbReference type="InParanoid" id="Q10409"/>
<dbReference type="OMA" id="KCENSAD"/>
<dbReference type="PhylomeDB" id="Q10409"/>
<dbReference type="PRO" id="PR:Q10409"/>
<dbReference type="Proteomes" id="UP000002485">
    <property type="component" value="Chromosome I"/>
</dbReference>
<dbReference type="GO" id="GO:0005737">
    <property type="term" value="C:cytoplasm"/>
    <property type="evidence" value="ECO:0000266"/>
    <property type="project" value="PomBase"/>
</dbReference>
<dbReference type="GO" id="GO:0005634">
    <property type="term" value="C:nucleus"/>
    <property type="evidence" value="ECO:0000266"/>
    <property type="project" value="PomBase"/>
</dbReference>
<dbReference type="GO" id="GO:0106388">
    <property type="term" value="F:18S rRNA aminocarboxypropyltransferase activity"/>
    <property type="evidence" value="ECO:0007669"/>
    <property type="project" value="InterPro"/>
</dbReference>
<dbReference type="GO" id="GO:0046872">
    <property type="term" value="F:metal ion binding"/>
    <property type="evidence" value="ECO:0000255"/>
    <property type="project" value="PomBase"/>
</dbReference>
<dbReference type="GO" id="GO:1904047">
    <property type="term" value="F:S-adenosyl-L-methionine binding"/>
    <property type="evidence" value="ECO:0007669"/>
    <property type="project" value="UniProtKB-UniRule"/>
</dbReference>
<dbReference type="GO" id="GO:0000455">
    <property type="term" value="P:enzyme-directed rRNA pseudouridine synthesis"/>
    <property type="evidence" value="ECO:0007669"/>
    <property type="project" value="UniProtKB-UniRule"/>
</dbReference>
<dbReference type="GO" id="GO:0030490">
    <property type="term" value="P:maturation of SSU-rRNA"/>
    <property type="evidence" value="ECO:0000318"/>
    <property type="project" value="GO_Central"/>
</dbReference>
<dbReference type="HAMAP" id="MF_01116">
    <property type="entry name" value="TSR3"/>
    <property type="match status" value="1"/>
</dbReference>
<dbReference type="InterPro" id="IPR007209">
    <property type="entry name" value="RNaseL-inhib-like_metal-bd_dom"/>
</dbReference>
<dbReference type="InterPro" id="IPR022968">
    <property type="entry name" value="Tsr3-like"/>
</dbReference>
<dbReference type="InterPro" id="IPR007177">
    <property type="entry name" value="Tsr3_C"/>
</dbReference>
<dbReference type="NCBIfam" id="NF002621">
    <property type="entry name" value="PRK02287.1"/>
    <property type="match status" value="1"/>
</dbReference>
<dbReference type="PANTHER" id="PTHR20426:SF0">
    <property type="entry name" value="18S RRNA AMINOCARBOXYPROPYLTRANSFERASE"/>
    <property type="match status" value="1"/>
</dbReference>
<dbReference type="PANTHER" id="PTHR20426">
    <property type="entry name" value="RIBOSOME BIOGENESIS PROTEIN TSR3 HOMOLOG"/>
    <property type="match status" value="1"/>
</dbReference>
<dbReference type="Pfam" id="PF04068">
    <property type="entry name" value="Fer4_RLI"/>
    <property type="match status" value="1"/>
</dbReference>
<dbReference type="Pfam" id="PF04034">
    <property type="entry name" value="Ribo_biogen_C"/>
    <property type="match status" value="1"/>
</dbReference>
<keyword id="KW-0963">Cytoplasm</keyword>
<keyword id="KW-0539">Nucleus</keyword>
<keyword id="KW-1185">Reference proteome</keyword>
<keyword id="KW-0690">Ribosome biogenesis</keyword>
<keyword id="KW-0698">rRNA processing</keyword>
<keyword id="KW-0949">S-adenosyl-L-methionine</keyword>
<keyword id="KW-0808">Transferase</keyword>